<protein>
    <recommendedName>
        <fullName evidence="2">Antiviral serine protease</fullName>
        <ecNumber evidence="1">3.4.21.-</ecNumber>
    </recommendedName>
</protein>
<proteinExistence type="evidence at protein level"/>
<comment type="function">
    <text evidence="1">Serine protease which has antiviral activity against cucumber mosaic virus and tobacco mosaic virus.</text>
</comment>
<comment type="biophysicochemical properties">
    <phDependence>
        <text evidence="1">Optimum pH is 9.5. Active from pH 7.0 to 10.0.</text>
    </phDependence>
    <temperatureDependence>
        <text evidence="1">Thermostable. Optimum temperature is 40-50 degrees Celsius. Stable up to 60 degrees Celsius and retains 60% of activity at 4 degrees Celsius.</text>
    </temperatureDependence>
</comment>
<keyword id="KW-0930">Antiviral protein</keyword>
<keyword id="KW-0903">Direct protein sequencing</keyword>
<keyword id="KW-0378">Hydrolase</keyword>
<keyword id="KW-0645">Protease</keyword>
<keyword id="KW-0720">Serine protease</keyword>
<sequence>VIAGGXAAIIG</sequence>
<evidence type="ECO:0000269" key="1">
    <source>
    </source>
</evidence>
<evidence type="ECO:0000303" key="2">
    <source>
    </source>
</evidence>
<evidence type="ECO:0000305" key="3"/>
<reference evidence="3" key="1">
    <citation type="journal article" date="2008" name="Comp. Biochem. Physiol.">
        <title>A novel anti-plant viral protein from coelomic fluid of the earthworm Eisenia foetida: purification, characterization and its identification as a serine protease.</title>
        <authorList>
            <person name="Ueda M."/>
            <person name="Noda K."/>
            <person name="Nakazawa M."/>
            <person name="Miyatake K."/>
            <person name="Ohki S."/>
            <person name="Sakaguchi M."/>
            <person name="Inouye K."/>
        </authorList>
    </citation>
    <scope>PROTEIN SEQUENCE</scope>
    <scope>FUNCTION</scope>
    <scope>BIOPHYSICOCHEMICAL PROPERTIES</scope>
    <source>
        <tissue evidence="1">Coelomic fluid</tissue>
    </source>
</reference>
<accession>P86931</accession>
<feature type="chain" id="PRO_0000411992" description="Antiviral serine protease">
    <location>
        <begin position="1"/>
        <end position="11" status="greater than"/>
    </location>
</feature>
<feature type="non-terminal residue" evidence="2">
    <location>
        <position position="11"/>
    </location>
</feature>
<name>AVPL_EISFE</name>
<organism>
    <name type="scientific">Eisenia fetida</name>
    <name type="common">Red wiggler worm</name>
    <dbReference type="NCBI Taxonomy" id="6396"/>
    <lineage>
        <taxon>Eukaryota</taxon>
        <taxon>Metazoa</taxon>
        <taxon>Spiralia</taxon>
        <taxon>Lophotrochozoa</taxon>
        <taxon>Annelida</taxon>
        <taxon>Clitellata</taxon>
        <taxon>Oligochaeta</taxon>
        <taxon>Crassiclitellata</taxon>
        <taxon>Lumbricina</taxon>
        <taxon>Lumbricidae</taxon>
        <taxon>Lumbricinae</taxon>
        <taxon>Eisenia</taxon>
    </lineage>
</organism>
<dbReference type="EC" id="3.4.21.-" evidence="1"/>
<dbReference type="GO" id="GO:0008236">
    <property type="term" value="F:serine-type peptidase activity"/>
    <property type="evidence" value="ECO:0007669"/>
    <property type="project" value="UniProtKB-KW"/>
</dbReference>
<dbReference type="GO" id="GO:0006508">
    <property type="term" value="P:proteolysis"/>
    <property type="evidence" value="ECO:0007669"/>
    <property type="project" value="UniProtKB-KW"/>
</dbReference>
<dbReference type="GO" id="GO:0050688">
    <property type="term" value="P:regulation of defense response to virus"/>
    <property type="evidence" value="ECO:0007669"/>
    <property type="project" value="UniProtKB-KW"/>
</dbReference>